<evidence type="ECO:0000250" key="1">
    <source>
        <dbReference type="UniProtKB" id="O60678"/>
    </source>
</evidence>
<evidence type="ECO:0000250" key="2">
    <source>
        <dbReference type="UniProtKB" id="O70467"/>
    </source>
</evidence>
<evidence type="ECO:0000255" key="3">
    <source>
        <dbReference type="PROSITE-ProRule" id="PRU01015"/>
    </source>
</evidence>
<evidence type="ECO:0000256" key="4">
    <source>
        <dbReference type="SAM" id="MobiDB-lite"/>
    </source>
</evidence>
<evidence type="ECO:0000305" key="5"/>
<reference key="1">
    <citation type="journal article" date="2000" name="DNA Res.">
        <title>Structural analysis of Arabidopsis thaliana chromosome 3. II. Sequence features of the 4,251,695 bp regions covered by 90 P1, TAC and BAC clones.</title>
        <authorList>
            <person name="Kaneko T."/>
            <person name="Katoh T."/>
            <person name="Sato S."/>
            <person name="Nakamura Y."/>
            <person name="Asamizu E."/>
            <person name="Tabata S."/>
        </authorList>
    </citation>
    <scope>NUCLEOTIDE SEQUENCE [LARGE SCALE GENOMIC DNA]</scope>
    <source>
        <strain>cv. Columbia</strain>
    </source>
</reference>
<reference key="2">
    <citation type="journal article" date="2000" name="Nature">
        <title>Sequence and analysis of chromosome 3 of the plant Arabidopsis thaliana.</title>
        <authorList>
            <person name="Salanoubat M."/>
            <person name="Lemcke K."/>
            <person name="Rieger M."/>
            <person name="Ansorge W."/>
            <person name="Unseld M."/>
            <person name="Fartmann B."/>
            <person name="Valle G."/>
            <person name="Bloecker H."/>
            <person name="Perez-Alonso M."/>
            <person name="Obermaier B."/>
            <person name="Delseny M."/>
            <person name="Boutry M."/>
            <person name="Grivell L.A."/>
            <person name="Mache R."/>
            <person name="Puigdomenech P."/>
            <person name="De Simone V."/>
            <person name="Choisne N."/>
            <person name="Artiguenave F."/>
            <person name="Robert C."/>
            <person name="Brottier P."/>
            <person name="Wincker P."/>
            <person name="Cattolico L."/>
            <person name="Weissenbach J."/>
            <person name="Saurin W."/>
            <person name="Quetier F."/>
            <person name="Schaefer M."/>
            <person name="Mueller-Auer S."/>
            <person name="Gabel C."/>
            <person name="Fuchs M."/>
            <person name="Benes V."/>
            <person name="Wurmbach E."/>
            <person name="Drzonek H."/>
            <person name="Erfle H."/>
            <person name="Jordan N."/>
            <person name="Bangert S."/>
            <person name="Wiedelmann R."/>
            <person name="Kranz H."/>
            <person name="Voss H."/>
            <person name="Holland R."/>
            <person name="Brandt P."/>
            <person name="Nyakatura G."/>
            <person name="Vezzi A."/>
            <person name="D'Angelo M."/>
            <person name="Pallavicini A."/>
            <person name="Toppo S."/>
            <person name="Simionati B."/>
            <person name="Conrad A."/>
            <person name="Hornischer K."/>
            <person name="Kauer G."/>
            <person name="Loehnert T.-H."/>
            <person name="Nordsiek G."/>
            <person name="Reichelt J."/>
            <person name="Scharfe M."/>
            <person name="Schoen O."/>
            <person name="Bargues M."/>
            <person name="Terol J."/>
            <person name="Climent J."/>
            <person name="Navarro P."/>
            <person name="Collado C."/>
            <person name="Perez-Perez A."/>
            <person name="Ottenwaelder B."/>
            <person name="Duchemin D."/>
            <person name="Cooke R."/>
            <person name="Laudie M."/>
            <person name="Berger-Llauro C."/>
            <person name="Purnelle B."/>
            <person name="Masuy D."/>
            <person name="de Haan M."/>
            <person name="Maarse A.C."/>
            <person name="Alcaraz J.-P."/>
            <person name="Cottet A."/>
            <person name="Casacuberta E."/>
            <person name="Monfort A."/>
            <person name="Argiriou A."/>
            <person name="Flores M."/>
            <person name="Liguori R."/>
            <person name="Vitale D."/>
            <person name="Mannhaupt G."/>
            <person name="Haase D."/>
            <person name="Schoof H."/>
            <person name="Rudd S."/>
            <person name="Zaccaria P."/>
            <person name="Mewes H.-W."/>
            <person name="Mayer K.F.X."/>
            <person name="Kaul S."/>
            <person name="Town C.D."/>
            <person name="Koo H.L."/>
            <person name="Tallon L.J."/>
            <person name="Jenkins J."/>
            <person name="Rooney T."/>
            <person name="Rizzo M."/>
            <person name="Walts A."/>
            <person name="Utterback T."/>
            <person name="Fujii C.Y."/>
            <person name="Shea T.P."/>
            <person name="Creasy T.H."/>
            <person name="Haas B."/>
            <person name="Maiti R."/>
            <person name="Wu D."/>
            <person name="Peterson J."/>
            <person name="Van Aken S."/>
            <person name="Pai G."/>
            <person name="Militscher J."/>
            <person name="Sellers P."/>
            <person name="Gill J.E."/>
            <person name="Feldblyum T.V."/>
            <person name="Preuss D."/>
            <person name="Lin X."/>
            <person name="Nierman W.C."/>
            <person name="Salzberg S.L."/>
            <person name="White O."/>
            <person name="Venter J.C."/>
            <person name="Fraser C.M."/>
            <person name="Kaneko T."/>
            <person name="Nakamura Y."/>
            <person name="Sato S."/>
            <person name="Kato T."/>
            <person name="Asamizu E."/>
            <person name="Sasamoto S."/>
            <person name="Kimura T."/>
            <person name="Idesawa K."/>
            <person name="Kawashima K."/>
            <person name="Kishida Y."/>
            <person name="Kiyokawa C."/>
            <person name="Kohara M."/>
            <person name="Matsumoto M."/>
            <person name="Matsuno A."/>
            <person name="Muraki A."/>
            <person name="Nakayama S."/>
            <person name="Nakazaki N."/>
            <person name="Shinpo S."/>
            <person name="Takeuchi C."/>
            <person name="Wada T."/>
            <person name="Watanabe A."/>
            <person name="Yamada M."/>
            <person name="Yasuda M."/>
            <person name="Tabata S."/>
        </authorList>
    </citation>
    <scope>NUCLEOTIDE SEQUENCE [LARGE SCALE GENOMIC DNA]</scope>
    <source>
        <strain>cv. Columbia</strain>
    </source>
</reference>
<reference key="3">
    <citation type="journal article" date="2017" name="Plant J.">
        <title>Araport11: a complete reannotation of the Arabidopsis thaliana reference genome.</title>
        <authorList>
            <person name="Cheng C.Y."/>
            <person name="Krishnakumar V."/>
            <person name="Chan A.P."/>
            <person name="Thibaud-Nissen F."/>
            <person name="Schobel S."/>
            <person name="Town C.D."/>
        </authorList>
    </citation>
    <scope>GENOME REANNOTATION</scope>
    <source>
        <strain>cv. Columbia</strain>
    </source>
</reference>
<reference key="4">
    <citation type="submission" date="2006-07" db="EMBL/GenBank/DDBJ databases">
        <title>Large-scale analysis of RIKEN Arabidopsis full-length (RAFL) cDNAs.</title>
        <authorList>
            <person name="Totoki Y."/>
            <person name="Seki M."/>
            <person name="Ishida J."/>
            <person name="Nakajima M."/>
            <person name="Enju A."/>
            <person name="Kamiya A."/>
            <person name="Narusaka M."/>
            <person name="Shin-i T."/>
            <person name="Nakagawa M."/>
            <person name="Sakamoto N."/>
            <person name="Oishi K."/>
            <person name="Kohara Y."/>
            <person name="Kobayashi M."/>
            <person name="Toyoda A."/>
            <person name="Sakaki Y."/>
            <person name="Sakurai T."/>
            <person name="Iida K."/>
            <person name="Akiyama K."/>
            <person name="Satou M."/>
            <person name="Toyoda T."/>
            <person name="Konagaya A."/>
            <person name="Carninci P."/>
            <person name="Kawai J."/>
            <person name="Hayashizaki Y."/>
            <person name="Shinozaki K."/>
        </authorList>
    </citation>
    <scope>NUCLEOTIDE SEQUENCE [LARGE SCALE MRNA]</scope>
    <source>
        <strain>cv. Columbia</strain>
    </source>
</reference>
<reference key="5">
    <citation type="journal article" date="2007" name="Pharmacol. Ther.">
        <title>Protein arginine methyltransferases: evolution and assessment of their pharmacological and therapeutic potential.</title>
        <authorList>
            <person name="Krause C.D."/>
            <person name="Yang Z.-H."/>
            <person name="Kim Y.-S."/>
            <person name="Lee J.-H."/>
            <person name="Cook J.R."/>
            <person name="Pestka S."/>
        </authorList>
    </citation>
    <scope>GENE FAMILY</scope>
    <scope>NOMENCLATURE</scope>
</reference>
<gene>
    <name type="primary">PRMT3</name>
    <name type="ordered locus">At3g12270</name>
    <name type="ORF">F28J15.7</name>
</gene>
<accession>Q0WVD6</accession>
<accession>Q9C7D0</accession>
<accession>Q9LHH9</accession>
<feature type="chain" id="PRO_0000293990" description="Probable protein arginine N-methyltransferase 3">
    <location>
        <begin position="1"/>
        <end position="601"/>
    </location>
</feature>
<feature type="domain" description="SAM-dependent MTase PRMT-type" evidence="3">
    <location>
        <begin position="242"/>
        <end position="554"/>
    </location>
</feature>
<feature type="zinc finger region" description="C2H2-type">
    <location>
        <begin position="57"/>
        <end position="78"/>
    </location>
</feature>
<feature type="region of interest" description="Disordered" evidence="4">
    <location>
        <begin position="1"/>
        <end position="50"/>
    </location>
</feature>
<feature type="compositionally biased region" description="Basic and acidic residues" evidence="4">
    <location>
        <begin position="1"/>
        <end position="10"/>
    </location>
</feature>
<feature type="compositionally biased region" description="Acidic residues" evidence="4">
    <location>
        <begin position="14"/>
        <end position="27"/>
    </location>
</feature>
<feature type="compositionally biased region" description="Acidic residues" evidence="4">
    <location>
        <begin position="35"/>
        <end position="50"/>
    </location>
</feature>
<feature type="active site" evidence="2">
    <location>
        <position position="365"/>
    </location>
</feature>
<feature type="active site" evidence="2">
    <location>
        <position position="374"/>
    </location>
</feature>
<feature type="binding site" evidence="2">
    <location>
        <position position="264"/>
    </location>
    <ligand>
        <name>S-adenosyl-L-homocysteine</name>
        <dbReference type="ChEBI" id="CHEBI:57856"/>
    </ligand>
</feature>
<feature type="binding site" evidence="2">
    <location>
        <position position="288"/>
    </location>
    <ligand>
        <name>S-adenosyl-L-homocysteine</name>
        <dbReference type="ChEBI" id="CHEBI:57856"/>
    </ligand>
</feature>
<feature type="binding site" evidence="2">
    <location>
        <position position="310"/>
    </location>
    <ligand>
        <name>S-adenosyl-L-homocysteine</name>
        <dbReference type="ChEBI" id="CHEBI:57856"/>
    </ligand>
</feature>
<feature type="binding site" evidence="2">
    <location>
        <position position="312"/>
    </location>
    <ligand>
        <name>S-adenosyl-L-homocysteine</name>
        <dbReference type="ChEBI" id="CHEBI:57856"/>
    </ligand>
</feature>
<feature type="binding site" evidence="2">
    <location>
        <position position="345"/>
    </location>
    <ligand>
        <name>S-adenosyl-L-homocysteine</name>
        <dbReference type="ChEBI" id="CHEBI:57856"/>
    </ligand>
</feature>
<feature type="binding site" evidence="2">
    <location>
        <position position="346"/>
    </location>
    <ligand>
        <name>S-adenosyl-L-homocysteine</name>
        <dbReference type="ChEBI" id="CHEBI:57856"/>
    </ligand>
</feature>
<protein>
    <recommendedName>
        <fullName>Probable protein arginine N-methyltransferase 3</fullName>
        <ecNumber evidence="1">2.1.1.319</ecNumber>
    </recommendedName>
</protein>
<keyword id="KW-0963">Cytoplasm</keyword>
<keyword id="KW-0479">Metal-binding</keyword>
<keyword id="KW-0489">Methyltransferase</keyword>
<keyword id="KW-1185">Reference proteome</keyword>
<keyword id="KW-0949">S-adenosyl-L-methionine</keyword>
<keyword id="KW-0808">Transferase</keyword>
<keyword id="KW-0862">Zinc</keyword>
<keyword id="KW-0863">Zinc-finger</keyword>
<name>ANM3_ARATH</name>
<sequence length="601" mass="67344">MAATMVKHEILNYSEDEEENYSDEGDWGDWKADDNGIEGGEEEEEDDGDDSESDFLCLFCDSHFVSCDLLFEHCRLSHGFDFHGVRKELKLDFYSSFKLINYIRSQVAENMCFSWKIEADDYKDVKFPWDEEKYLKPFWQEDSLLYSFADDEEDEEVTFDREEVMEELQKLGDLSIDVEALGESSMSNSDKCNINGSKDVTSLSNCNGLKQSSADDLIVNGKDAEPKVCDGRLVNRNIRKVNENYFGSYSSFGIHREMLSDKVRTEAYRDALLKNPTLLNGSVVMDVGCGTGILSLFAAKAGASRVVAVEASEKMAKVATKIAKDNKVFNDNEHNGVLEVAHSMVEELDKSIQIQPHSVDVLVSEWMGYCLLYESMLSSVLYARDRWLKPGGAILPDTATMFVAGFGKGATSLPFWEDVYGFDMSSIGKEIHDDTTRLPIVDVIAERDLVTQPTLLQTFDLATMKPDEVDFTATATLEPTESEAKTRLCHGVVLWFDTGFTSRFCKENPTVLSTSPYTPPTHWAQTILTFQEPISVAPASVLSGNDRREAIGTEECPASSIHLRVSVARAHEHRSIDISLEATGLSSKGQKRHWPVQIFNL</sequence>
<organism>
    <name type="scientific">Arabidopsis thaliana</name>
    <name type="common">Mouse-ear cress</name>
    <dbReference type="NCBI Taxonomy" id="3702"/>
    <lineage>
        <taxon>Eukaryota</taxon>
        <taxon>Viridiplantae</taxon>
        <taxon>Streptophyta</taxon>
        <taxon>Embryophyta</taxon>
        <taxon>Tracheophyta</taxon>
        <taxon>Spermatophyta</taxon>
        <taxon>Magnoliopsida</taxon>
        <taxon>eudicotyledons</taxon>
        <taxon>Gunneridae</taxon>
        <taxon>Pentapetalae</taxon>
        <taxon>rosids</taxon>
        <taxon>malvids</taxon>
        <taxon>Brassicales</taxon>
        <taxon>Brassicaceae</taxon>
        <taxon>Camelineae</taxon>
        <taxon>Arabidopsis</taxon>
    </lineage>
</organism>
<comment type="function">
    <text evidence="1">Protein-arginine N-methyltransferase that catalyzes both the monomethylation and asymmetric dimethylation of the guanidino nitrogens of arginine residues in target proteins, and therefore falls into the group of type I methyltransferases.</text>
</comment>
<comment type="catalytic activity">
    <reaction evidence="1">
        <text>L-arginyl-[protein] + S-adenosyl-L-methionine = N(omega)-methyl-L-arginyl-[protein] + S-adenosyl-L-homocysteine + H(+)</text>
        <dbReference type="Rhea" id="RHEA:48100"/>
        <dbReference type="Rhea" id="RHEA-COMP:10532"/>
        <dbReference type="Rhea" id="RHEA-COMP:11990"/>
        <dbReference type="ChEBI" id="CHEBI:15378"/>
        <dbReference type="ChEBI" id="CHEBI:29965"/>
        <dbReference type="ChEBI" id="CHEBI:57856"/>
        <dbReference type="ChEBI" id="CHEBI:59789"/>
        <dbReference type="ChEBI" id="CHEBI:65280"/>
    </reaction>
    <physiologicalReaction direction="left-to-right" evidence="1">
        <dbReference type="Rhea" id="RHEA:48101"/>
    </physiologicalReaction>
</comment>
<comment type="catalytic activity">
    <reaction evidence="1">
        <text>L-arginyl-[protein] + 2 S-adenosyl-L-methionine = N(omega),N(omega)-dimethyl-L-arginyl-[protein] + 2 S-adenosyl-L-homocysteine + 2 H(+)</text>
        <dbReference type="Rhea" id="RHEA:48096"/>
        <dbReference type="Rhea" id="RHEA-COMP:10532"/>
        <dbReference type="Rhea" id="RHEA-COMP:11991"/>
        <dbReference type="ChEBI" id="CHEBI:15378"/>
        <dbReference type="ChEBI" id="CHEBI:29965"/>
        <dbReference type="ChEBI" id="CHEBI:57856"/>
        <dbReference type="ChEBI" id="CHEBI:59789"/>
        <dbReference type="ChEBI" id="CHEBI:61897"/>
        <dbReference type="EC" id="2.1.1.319"/>
    </reaction>
    <physiologicalReaction direction="left-to-right" evidence="1">
        <dbReference type="Rhea" id="RHEA:48097"/>
    </physiologicalReaction>
</comment>
<comment type="subcellular location">
    <subcellularLocation>
        <location evidence="1">Cytoplasm</location>
        <location evidence="1">Cytosol</location>
    </subcellularLocation>
</comment>
<comment type="domain">
    <text evidence="2">The C2H2-type zinc-finger is responsible for substrate specificity.</text>
</comment>
<comment type="similarity">
    <text evidence="3">Belongs to the class I-like SAM-binding methyltransferase superfamily. Protein arginine N-methyltransferase family.</text>
</comment>
<comment type="sequence caution" evidence="5">
    <conflict type="erroneous gene model prediction">
        <sequence resource="EMBL-CDS" id="AAG51062"/>
    </conflict>
</comment>
<comment type="sequence caution" evidence="5">
    <conflict type="erroneous gene model prediction">
        <sequence resource="EMBL-CDS" id="BAB03136"/>
    </conflict>
</comment>
<dbReference type="EC" id="2.1.1.319" evidence="1"/>
<dbReference type="EMBL" id="AP002047">
    <property type="protein sequence ID" value="BAB03136.1"/>
    <property type="status" value="ALT_SEQ"/>
    <property type="molecule type" value="Genomic_DNA"/>
</dbReference>
<dbReference type="EMBL" id="AC069472">
    <property type="protein sequence ID" value="AAG51062.1"/>
    <property type="status" value="ALT_SEQ"/>
    <property type="molecule type" value="Genomic_DNA"/>
</dbReference>
<dbReference type="EMBL" id="CP002686">
    <property type="protein sequence ID" value="AEE75178.1"/>
    <property type="molecule type" value="Genomic_DNA"/>
</dbReference>
<dbReference type="EMBL" id="AK226816">
    <property type="protein sequence ID" value="BAE98912.1"/>
    <property type="molecule type" value="mRNA"/>
</dbReference>
<dbReference type="RefSeq" id="NP_187835.2">
    <property type="nucleotide sequence ID" value="NM_112063.4"/>
</dbReference>
<dbReference type="SMR" id="Q0WVD6"/>
<dbReference type="BioGRID" id="5741">
    <property type="interactions" value="2"/>
</dbReference>
<dbReference type="FunCoup" id="Q0WVD6">
    <property type="interactions" value="420"/>
</dbReference>
<dbReference type="IntAct" id="Q0WVD6">
    <property type="interactions" value="2"/>
</dbReference>
<dbReference type="STRING" id="3702.Q0WVD6"/>
<dbReference type="iPTMnet" id="Q0WVD6"/>
<dbReference type="PaxDb" id="3702-AT3G12270.1"/>
<dbReference type="ProteomicsDB" id="240324"/>
<dbReference type="EnsemblPlants" id="AT3G12270.1">
    <property type="protein sequence ID" value="AT3G12270.1"/>
    <property type="gene ID" value="AT3G12270"/>
</dbReference>
<dbReference type="GeneID" id="820407"/>
<dbReference type="Gramene" id="AT3G12270.1">
    <property type="protein sequence ID" value="AT3G12270.1"/>
    <property type="gene ID" value="AT3G12270"/>
</dbReference>
<dbReference type="KEGG" id="ath:AT3G12270"/>
<dbReference type="Araport" id="AT3G12270"/>
<dbReference type="TAIR" id="AT3G12270">
    <property type="gene designation" value="PRMT3"/>
</dbReference>
<dbReference type="eggNOG" id="KOG1499">
    <property type="taxonomic scope" value="Eukaryota"/>
</dbReference>
<dbReference type="HOGENOM" id="CLU_017375_6_1_1"/>
<dbReference type="InParanoid" id="Q0WVD6"/>
<dbReference type="OMA" id="YSHFAIH"/>
<dbReference type="OrthoDB" id="7848332at2759"/>
<dbReference type="PhylomeDB" id="Q0WVD6"/>
<dbReference type="PRO" id="PR:Q0WVD6"/>
<dbReference type="Proteomes" id="UP000006548">
    <property type="component" value="Chromosome 3"/>
</dbReference>
<dbReference type="ExpressionAtlas" id="Q0WVD6">
    <property type="expression patterns" value="baseline and differential"/>
</dbReference>
<dbReference type="GO" id="GO:0005829">
    <property type="term" value="C:cytosol"/>
    <property type="evidence" value="ECO:0007669"/>
    <property type="project" value="UniProtKB-SubCell"/>
</dbReference>
<dbReference type="GO" id="GO:0035242">
    <property type="term" value="F:protein-arginine omega-N asymmetric methyltransferase activity"/>
    <property type="evidence" value="ECO:0007669"/>
    <property type="project" value="RHEA"/>
</dbReference>
<dbReference type="GO" id="GO:0035241">
    <property type="term" value="F:protein-arginine omega-N monomethyltransferase activity"/>
    <property type="evidence" value="ECO:0007669"/>
    <property type="project" value="RHEA"/>
</dbReference>
<dbReference type="GO" id="GO:0000976">
    <property type="term" value="F:transcription cis-regulatory region binding"/>
    <property type="evidence" value="ECO:0000353"/>
    <property type="project" value="TAIR"/>
</dbReference>
<dbReference type="GO" id="GO:0008270">
    <property type="term" value="F:zinc ion binding"/>
    <property type="evidence" value="ECO:0007669"/>
    <property type="project" value="UniProtKB-KW"/>
</dbReference>
<dbReference type="GO" id="GO:0032259">
    <property type="term" value="P:methylation"/>
    <property type="evidence" value="ECO:0007669"/>
    <property type="project" value="UniProtKB-KW"/>
</dbReference>
<dbReference type="CDD" id="cd02440">
    <property type="entry name" value="AdoMet_MTases"/>
    <property type="match status" value="1"/>
</dbReference>
<dbReference type="FunFam" id="3.40.50.150:FF:000016">
    <property type="entry name" value="Protein arginine N-methyltransferase 6"/>
    <property type="match status" value="1"/>
</dbReference>
<dbReference type="Gene3D" id="2.70.160.11">
    <property type="entry name" value="Hnrnp arginine n-methyltransferase1"/>
    <property type="match status" value="1"/>
</dbReference>
<dbReference type="Gene3D" id="3.40.50.150">
    <property type="entry name" value="Vaccinia Virus protein VP39"/>
    <property type="match status" value="1"/>
</dbReference>
<dbReference type="InterPro" id="IPR049482">
    <property type="entry name" value="ANM3-like_C2H2_Zf"/>
</dbReference>
<dbReference type="InterPro" id="IPR025799">
    <property type="entry name" value="Arg_MeTrfase"/>
</dbReference>
<dbReference type="InterPro" id="IPR041698">
    <property type="entry name" value="Methyltransf_25"/>
</dbReference>
<dbReference type="InterPro" id="IPR055135">
    <property type="entry name" value="PRMT_dom"/>
</dbReference>
<dbReference type="InterPro" id="IPR029063">
    <property type="entry name" value="SAM-dependent_MTases_sf"/>
</dbReference>
<dbReference type="InterPro" id="IPR036236">
    <property type="entry name" value="Znf_C2H2_sf"/>
</dbReference>
<dbReference type="InterPro" id="IPR013087">
    <property type="entry name" value="Znf_C2H2_type"/>
</dbReference>
<dbReference type="PANTHER" id="PTHR11006">
    <property type="entry name" value="PROTEIN ARGININE N-METHYLTRANSFERASE"/>
    <property type="match status" value="1"/>
</dbReference>
<dbReference type="PANTHER" id="PTHR11006:SF89">
    <property type="entry name" value="PROTEIN ARGININE N-METHYLTRANSFERASE 3-RELATED"/>
    <property type="match status" value="1"/>
</dbReference>
<dbReference type="Pfam" id="PF21137">
    <property type="entry name" value="ANM3_C2H2_Zf"/>
    <property type="match status" value="1"/>
</dbReference>
<dbReference type="Pfam" id="PF13649">
    <property type="entry name" value="Methyltransf_25"/>
    <property type="match status" value="1"/>
</dbReference>
<dbReference type="Pfam" id="PF22528">
    <property type="entry name" value="PRMT_C"/>
    <property type="match status" value="1"/>
</dbReference>
<dbReference type="SUPFAM" id="SSF57667">
    <property type="entry name" value="beta-beta-alpha zinc fingers"/>
    <property type="match status" value="1"/>
</dbReference>
<dbReference type="SUPFAM" id="SSF53335">
    <property type="entry name" value="S-adenosyl-L-methionine-dependent methyltransferases"/>
    <property type="match status" value="1"/>
</dbReference>
<dbReference type="PROSITE" id="PS51678">
    <property type="entry name" value="SAM_MT_PRMT"/>
    <property type="match status" value="1"/>
</dbReference>
<dbReference type="PROSITE" id="PS00028">
    <property type="entry name" value="ZINC_FINGER_C2H2_1"/>
    <property type="match status" value="1"/>
</dbReference>
<proteinExistence type="evidence at transcript level"/>